<protein>
    <recommendedName>
        <fullName evidence="2">D-alanine--D-alanine ligase</fullName>
        <ecNumber evidence="2">6.3.2.4</ecNumber>
    </recommendedName>
    <alternativeName>
        <fullName evidence="2">D-Ala-D-Ala ligase</fullName>
    </alternativeName>
    <alternativeName>
        <fullName evidence="2">D-alanylalanine synthetase</fullName>
    </alternativeName>
</protein>
<feature type="chain" id="PRO_1000202208" description="D-alanine--D-alanine ligase">
    <location>
        <begin position="1"/>
        <end position="317"/>
    </location>
</feature>
<feature type="domain" description="ATP-grasp" evidence="2">
    <location>
        <begin position="103"/>
        <end position="299"/>
    </location>
</feature>
<feature type="binding site" evidence="2">
    <location>
        <begin position="130"/>
        <end position="183"/>
    </location>
    <ligand>
        <name>ATP</name>
        <dbReference type="ChEBI" id="CHEBI:30616"/>
    </ligand>
</feature>
<feature type="binding site" evidence="2">
    <location>
        <position position="251"/>
    </location>
    <ligand>
        <name>Mg(2+)</name>
        <dbReference type="ChEBI" id="CHEBI:18420"/>
        <label>1</label>
    </ligand>
</feature>
<feature type="binding site" evidence="2">
    <location>
        <position position="265"/>
    </location>
    <ligand>
        <name>Mg(2+)</name>
        <dbReference type="ChEBI" id="CHEBI:18420"/>
        <label>1</label>
    </ligand>
</feature>
<feature type="binding site" evidence="2">
    <location>
        <position position="265"/>
    </location>
    <ligand>
        <name>Mg(2+)</name>
        <dbReference type="ChEBI" id="CHEBI:18420"/>
        <label>2</label>
    </ligand>
</feature>
<feature type="binding site" evidence="2">
    <location>
        <position position="267"/>
    </location>
    <ligand>
        <name>Mg(2+)</name>
        <dbReference type="ChEBI" id="CHEBI:18420"/>
        <label>2</label>
    </ligand>
</feature>
<accession>C0R5F9</accession>
<evidence type="ECO:0000250" key="1"/>
<evidence type="ECO:0000255" key="2">
    <source>
        <dbReference type="HAMAP-Rule" id="MF_00047"/>
    </source>
</evidence>
<name>DDL_WOLWR</name>
<organism>
    <name type="scientific">Wolbachia sp. subsp. Drosophila simulans (strain wRi)</name>
    <dbReference type="NCBI Taxonomy" id="66084"/>
    <lineage>
        <taxon>Bacteria</taxon>
        <taxon>Pseudomonadati</taxon>
        <taxon>Pseudomonadota</taxon>
        <taxon>Alphaproteobacteria</taxon>
        <taxon>Rickettsiales</taxon>
        <taxon>Anaplasmataceae</taxon>
        <taxon>Wolbachieae</taxon>
        <taxon>Wolbachia</taxon>
    </lineage>
</organism>
<reference key="1">
    <citation type="journal article" date="2009" name="Proc. Natl. Acad. Sci. U.S.A.">
        <title>The mosaic genome structure of the Wolbachia wRi strain infecting Drosophila simulans.</title>
        <authorList>
            <person name="Klasson L."/>
            <person name="Westberg J."/>
            <person name="Sapountzis P."/>
            <person name="Naeslund K."/>
            <person name="Lutnaes Y."/>
            <person name="Darby A.C."/>
            <person name="Veneti Z."/>
            <person name="Chen L."/>
            <person name="Braig H.R."/>
            <person name="Garrett R."/>
            <person name="Bourtzis K."/>
            <person name="Andersson S.G."/>
        </authorList>
    </citation>
    <scope>NUCLEOTIDE SEQUENCE [LARGE SCALE GENOMIC DNA]</scope>
    <source>
        <strain>wRi</strain>
    </source>
</reference>
<comment type="function">
    <text evidence="2">Cell wall formation.</text>
</comment>
<comment type="catalytic activity">
    <reaction evidence="2">
        <text>2 D-alanine + ATP = D-alanyl-D-alanine + ADP + phosphate + H(+)</text>
        <dbReference type="Rhea" id="RHEA:11224"/>
        <dbReference type="ChEBI" id="CHEBI:15378"/>
        <dbReference type="ChEBI" id="CHEBI:30616"/>
        <dbReference type="ChEBI" id="CHEBI:43474"/>
        <dbReference type="ChEBI" id="CHEBI:57416"/>
        <dbReference type="ChEBI" id="CHEBI:57822"/>
        <dbReference type="ChEBI" id="CHEBI:456216"/>
        <dbReference type="EC" id="6.3.2.4"/>
    </reaction>
</comment>
<comment type="cofactor">
    <cofactor evidence="1">
        <name>Mg(2+)</name>
        <dbReference type="ChEBI" id="CHEBI:18420"/>
    </cofactor>
    <cofactor evidence="1">
        <name>Mn(2+)</name>
        <dbReference type="ChEBI" id="CHEBI:29035"/>
    </cofactor>
    <text evidence="1">Binds 2 magnesium or manganese ions per subunit.</text>
</comment>
<comment type="pathway">
    <text evidence="2">Cell wall biogenesis; peptidoglycan biosynthesis.</text>
</comment>
<comment type="subcellular location">
    <subcellularLocation>
        <location evidence="2">Cytoplasm</location>
    </subcellularLocation>
</comment>
<comment type="similarity">
    <text evidence="2">Belongs to the D-alanine--D-alanine ligase family.</text>
</comment>
<keyword id="KW-0067">ATP-binding</keyword>
<keyword id="KW-0133">Cell shape</keyword>
<keyword id="KW-0961">Cell wall biogenesis/degradation</keyword>
<keyword id="KW-0963">Cytoplasm</keyword>
<keyword id="KW-0436">Ligase</keyword>
<keyword id="KW-0460">Magnesium</keyword>
<keyword id="KW-0464">Manganese</keyword>
<keyword id="KW-0479">Metal-binding</keyword>
<keyword id="KW-0547">Nucleotide-binding</keyword>
<keyword id="KW-0573">Peptidoglycan synthesis</keyword>
<dbReference type="EC" id="6.3.2.4" evidence="2"/>
<dbReference type="EMBL" id="CP001391">
    <property type="protein sequence ID" value="ACN95001.1"/>
    <property type="molecule type" value="Genomic_DNA"/>
</dbReference>
<dbReference type="RefSeq" id="WP_012673074.1">
    <property type="nucleotide sequence ID" value="NZ_MKIF01000123.1"/>
</dbReference>
<dbReference type="SMR" id="C0R5F9"/>
<dbReference type="STRING" id="66084.WRi_001550"/>
<dbReference type="KEGG" id="wri:WRi_001550"/>
<dbReference type="HOGENOM" id="CLU_039268_1_1_5"/>
<dbReference type="UniPathway" id="UPA00219"/>
<dbReference type="Proteomes" id="UP000001293">
    <property type="component" value="Chromosome"/>
</dbReference>
<dbReference type="GO" id="GO:0005737">
    <property type="term" value="C:cytoplasm"/>
    <property type="evidence" value="ECO:0007669"/>
    <property type="project" value="UniProtKB-SubCell"/>
</dbReference>
<dbReference type="GO" id="GO:0005524">
    <property type="term" value="F:ATP binding"/>
    <property type="evidence" value="ECO:0007669"/>
    <property type="project" value="UniProtKB-KW"/>
</dbReference>
<dbReference type="GO" id="GO:0008716">
    <property type="term" value="F:D-alanine-D-alanine ligase activity"/>
    <property type="evidence" value="ECO:0007669"/>
    <property type="project" value="UniProtKB-UniRule"/>
</dbReference>
<dbReference type="GO" id="GO:0046872">
    <property type="term" value="F:metal ion binding"/>
    <property type="evidence" value="ECO:0007669"/>
    <property type="project" value="UniProtKB-KW"/>
</dbReference>
<dbReference type="GO" id="GO:0071555">
    <property type="term" value="P:cell wall organization"/>
    <property type="evidence" value="ECO:0007669"/>
    <property type="project" value="UniProtKB-KW"/>
</dbReference>
<dbReference type="GO" id="GO:0009252">
    <property type="term" value="P:peptidoglycan biosynthetic process"/>
    <property type="evidence" value="ECO:0007669"/>
    <property type="project" value="UniProtKB-UniRule"/>
</dbReference>
<dbReference type="GO" id="GO:0008360">
    <property type="term" value="P:regulation of cell shape"/>
    <property type="evidence" value="ECO:0007669"/>
    <property type="project" value="UniProtKB-KW"/>
</dbReference>
<dbReference type="Gene3D" id="3.40.50.20">
    <property type="match status" value="1"/>
</dbReference>
<dbReference type="Gene3D" id="3.30.1490.20">
    <property type="entry name" value="ATP-grasp fold, A domain"/>
    <property type="match status" value="1"/>
</dbReference>
<dbReference type="Gene3D" id="3.30.470.20">
    <property type="entry name" value="ATP-grasp fold, B domain"/>
    <property type="match status" value="1"/>
</dbReference>
<dbReference type="HAMAP" id="MF_00047">
    <property type="entry name" value="Dala_Dala_lig"/>
    <property type="match status" value="1"/>
</dbReference>
<dbReference type="InterPro" id="IPR011761">
    <property type="entry name" value="ATP-grasp"/>
</dbReference>
<dbReference type="InterPro" id="IPR013815">
    <property type="entry name" value="ATP_grasp_subdomain_1"/>
</dbReference>
<dbReference type="InterPro" id="IPR000291">
    <property type="entry name" value="D-Ala_lig_Van_CS"/>
</dbReference>
<dbReference type="InterPro" id="IPR005905">
    <property type="entry name" value="D_ala_D_ala"/>
</dbReference>
<dbReference type="InterPro" id="IPR011095">
    <property type="entry name" value="Dala_Dala_lig_C"/>
</dbReference>
<dbReference type="InterPro" id="IPR011127">
    <property type="entry name" value="Dala_Dala_lig_N"/>
</dbReference>
<dbReference type="InterPro" id="IPR016185">
    <property type="entry name" value="PreATP-grasp_dom_sf"/>
</dbReference>
<dbReference type="NCBIfam" id="TIGR01205">
    <property type="entry name" value="D_ala_D_alaTIGR"/>
    <property type="match status" value="1"/>
</dbReference>
<dbReference type="NCBIfam" id="NF002378">
    <property type="entry name" value="PRK01372.1"/>
    <property type="match status" value="1"/>
</dbReference>
<dbReference type="PANTHER" id="PTHR23132">
    <property type="entry name" value="D-ALANINE--D-ALANINE LIGASE"/>
    <property type="match status" value="1"/>
</dbReference>
<dbReference type="PANTHER" id="PTHR23132:SF23">
    <property type="entry name" value="D-ALANINE--D-ALANINE LIGASE B"/>
    <property type="match status" value="1"/>
</dbReference>
<dbReference type="Pfam" id="PF07478">
    <property type="entry name" value="Dala_Dala_lig_C"/>
    <property type="match status" value="1"/>
</dbReference>
<dbReference type="Pfam" id="PF01820">
    <property type="entry name" value="Dala_Dala_lig_N"/>
    <property type="match status" value="1"/>
</dbReference>
<dbReference type="PIRSF" id="PIRSF039102">
    <property type="entry name" value="Ddl/VanB"/>
    <property type="match status" value="1"/>
</dbReference>
<dbReference type="SUPFAM" id="SSF56059">
    <property type="entry name" value="Glutathione synthetase ATP-binding domain-like"/>
    <property type="match status" value="1"/>
</dbReference>
<dbReference type="SUPFAM" id="SSF52440">
    <property type="entry name" value="PreATP-grasp domain"/>
    <property type="match status" value="1"/>
</dbReference>
<dbReference type="PROSITE" id="PS50975">
    <property type="entry name" value="ATP_GRASP"/>
    <property type="match status" value="1"/>
</dbReference>
<dbReference type="PROSITE" id="PS00843">
    <property type="entry name" value="DALA_DALA_LIGASE_1"/>
    <property type="match status" value="1"/>
</dbReference>
<proteinExistence type="inferred from homology"/>
<sequence length="317" mass="35727">MLMIPTIAILSGGFSCEREISLMSGKAVKKALDSLSYNAIEIDVDSNIAEKLKKINPGLAFIALHGPYGEDGCIQGLLEILGIKYTHSGVMASAVAINKVMSKHIFRSLNIDTPKGYVISREDVLKNNIKIDYPYVLKPINEGSSIGVYIIFSHEDYLELKDNSSTIMEKMIVEEYIPGIELHTAVLLDEAIGTIEVRPKNKFYDYEAKYTDGFAEHIFPAKIPDNIYKMTLEHALKIHQFLGCKTISRSDFRYNPKNNTLKMLEINTHPGFTELSLVPEIAKLAKGINFNELVKIIIEDSLQHKNIRDLSHVEQYY</sequence>
<gene>
    <name evidence="2" type="primary">ddl</name>
    <name type="ordered locus">WRi_001550</name>
</gene>